<protein>
    <recommendedName>
        <fullName evidence="1">Lipoprotein-releasing system ATP-binding protein LolD</fullName>
        <ecNumber evidence="1">7.6.2.-</ecNumber>
    </recommendedName>
</protein>
<accession>Q5E0B3</accession>
<evidence type="ECO:0000255" key="1">
    <source>
        <dbReference type="HAMAP-Rule" id="MF_01708"/>
    </source>
</evidence>
<keyword id="KW-0067">ATP-binding</keyword>
<keyword id="KW-0997">Cell inner membrane</keyword>
<keyword id="KW-1003">Cell membrane</keyword>
<keyword id="KW-0472">Membrane</keyword>
<keyword id="KW-0547">Nucleotide-binding</keyword>
<keyword id="KW-1185">Reference proteome</keyword>
<keyword id="KW-1278">Translocase</keyword>
<keyword id="KW-0813">Transport</keyword>
<organism>
    <name type="scientific">Aliivibrio fischeri (strain ATCC 700601 / ES114)</name>
    <name type="common">Vibrio fischeri</name>
    <dbReference type="NCBI Taxonomy" id="312309"/>
    <lineage>
        <taxon>Bacteria</taxon>
        <taxon>Pseudomonadati</taxon>
        <taxon>Pseudomonadota</taxon>
        <taxon>Gammaproteobacteria</taxon>
        <taxon>Vibrionales</taxon>
        <taxon>Vibrionaceae</taxon>
        <taxon>Aliivibrio</taxon>
    </lineage>
</organism>
<feature type="chain" id="PRO_0000272164" description="Lipoprotein-releasing system ATP-binding protein LolD">
    <location>
        <begin position="1"/>
        <end position="238"/>
    </location>
</feature>
<feature type="domain" description="ABC transporter" evidence="1">
    <location>
        <begin position="6"/>
        <end position="238"/>
    </location>
</feature>
<feature type="binding site" evidence="1">
    <location>
        <begin position="42"/>
        <end position="49"/>
    </location>
    <ligand>
        <name>ATP</name>
        <dbReference type="ChEBI" id="CHEBI:30616"/>
    </ligand>
</feature>
<dbReference type="EC" id="7.6.2.-" evidence="1"/>
<dbReference type="EMBL" id="CP000021">
    <property type="protein sequence ID" value="AAW87533.1"/>
    <property type="molecule type" value="Genomic_DNA"/>
</dbReference>
<dbReference type="RefSeq" id="WP_011263326.1">
    <property type="nucleotide sequence ID" value="NC_006841.2"/>
</dbReference>
<dbReference type="RefSeq" id="YP_206421.1">
    <property type="nucleotide sequence ID" value="NC_006841.2"/>
</dbReference>
<dbReference type="SMR" id="Q5E0B3"/>
<dbReference type="STRING" id="312309.VF_A0463"/>
<dbReference type="EnsemblBacteria" id="AAW87533">
    <property type="protein sequence ID" value="AAW87533"/>
    <property type="gene ID" value="VF_A0463"/>
</dbReference>
<dbReference type="GeneID" id="54165787"/>
<dbReference type="KEGG" id="vfi:VF_A0463"/>
<dbReference type="PATRIC" id="fig|312309.11.peg.3066"/>
<dbReference type="eggNOG" id="COG1136">
    <property type="taxonomic scope" value="Bacteria"/>
</dbReference>
<dbReference type="HOGENOM" id="CLU_000604_1_22_6"/>
<dbReference type="OrthoDB" id="9801477at2"/>
<dbReference type="Proteomes" id="UP000000537">
    <property type="component" value="Chromosome II"/>
</dbReference>
<dbReference type="GO" id="GO:0005886">
    <property type="term" value="C:plasma membrane"/>
    <property type="evidence" value="ECO:0007669"/>
    <property type="project" value="UniProtKB-SubCell"/>
</dbReference>
<dbReference type="GO" id="GO:0005524">
    <property type="term" value="F:ATP binding"/>
    <property type="evidence" value="ECO:0007669"/>
    <property type="project" value="UniProtKB-KW"/>
</dbReference>
<dbReference type="GO" id="GO:0016887">
    <property type="term" value="F:ATP hydrolysis activity"/>
    <property type="evidence" value="ECO:0007669"/>
    <property type="project" value="InterPro"/>
</dbReference>
<dbReference type="GO" id="GO:0044873">
    <property type="term" value="P:lipoprotein localization to membrane"/>
    <property type="evidence" value="ECO:0007669"/>
    <property type="project" value="InterPro"/>
</dbReference>
<dbReference type="CDD" id="cd03255">
    <property type="entry name" value="ABC_MJ0796_LolCDE_FtsE"/>
    <property type="match status" value="1"/>
</dbReference>
<dbReference type="FunFam" id="3.40.50.300:FF:000230">
    <property type="entry name" value="Lipoprotein-releasing system ATP-binding protein LolD"/>
    <property type="match status" value="1"/>
</dbReference>
<dbReference type="Gene3D" id="3.40.50.300">
    <property type="entry name" value="P-loop containing nucleotide triphosphate hydrolases"/>
    <property type="match status" value="1"/>
</dbReference>
<dbReference type="InterPro" id="IPR003593">
    <property type="entry name" value="AAA+_ATPase"/>
</dbReference>
<dbReference type="InterPro" id="IPR003439">
    <property type="entry name" value="ABC_transporter-like_ATP-bd"/>
</dbReference>
<dbReference type="InterPro" id="IPR017871">
    <property type="entry name" value="ABC_transporter-like_CS"/>
</dbReference>
<dbReference type="InterPro" id="IPR011924">
    <property type="entry name" value="LolD_lipo_ATP-bd"/>
</dbReference>
<dbReference type="InterPro" id="IPR017911">
    <property type="entry name" value="MacB-like_ATP-bd"/>
</dbReference>
<dbReference type="InterPro" id="IPR027417">
    <property type="entry name" value="P-loop_NTPase"/>
</dbReference>
<dbReference type="NCBIfam" id="TIGR02211">
    <property type="entry name" value="LolD_lipo_ex"/>
    <property type="match status" value="1"/>
</dbReference>
<dbReference type="PANTHER" id="PTHR42798:SF2">
    <property type="entry name" value="ABC TRANSPORTER ATP-BINDING PROTEIN MG467-RELATED"/>
    <property type="match status" value="1"/>
</dbReference>
<dbReference type="PANTHER" id="PTHR42798">
    <property type="entry name" value="LIPOPROTEIN-RELEASING SYSTEM ATP-BINDING PROTEIN LOLD"/>
    <property type="match status" value="1"/>
</dbReference>
<dbReference type="Pfam" id="PF00005">
    <property type="entry name" value="ABC_tran"/>
    <property type="match status" value="1"/>
</dbReference>
<dbReference type="SMART" id="SM00382">
    <property type="entry name" value="AAA"/>
    <property type="match status" value="1"/>
</dbReference>
<dbReference type="SUPFAM" id="SSF52540">
    <property type="entry name" value="P-loop containing nucleoside triphosphate hydrolases"/>
    <property type="match status" value="1"/>
</dbReference>
<dbReference type="PROSITE" id="PS00211">
    <property type="entry name" value="ABC_TRANSPORTER_1"/>
    <property type="match status" value="1"/>
</dbReference>
<dbReference type="PROSITE" id="PS50893">
    <property type="entry name" value="ABC_TRANSPORTER_2"/>
    <property type="match status" value="1"/>
</dbReference>
<dbReference type="PROSITE" id="PS51244">
    <property type="entry name" value="LOLD"/>
    <property type="match status" value="1"/>
</dbReference>
<gene>
    <name evidence="1" type="primary">lolD</name>
    <name type="ordered locus">VF_A0463</name>
</gene>
<reference key="1">
    <citation type="journal article" date="2005" name="Proc. Natl. Acad. Sci. U.S.A.">
        <title>Complete genome sequence of Vibrio fischeri: a symbiotic bacterium with pathogenic congeners.</title>
        <authorList>
            <person name="Ruby E.G."/>
            <person name="Urbanowski M."/>
            <person name="Campbell J."/>
            <person name="Dunn A."/>
            <person name="Faini M."/>
            <person name="Gunsalus R."/>
            <person name="Lostroh P."/>
            <person name="Lupp C."/>
            <person name="McCann J."/>
            <person name="Millikan D."/>
            <person name="Schaefer A."/>
            <person name="Stabb E."/>
            <person name="Stevens A."/>
            <person name="Visick K."/>
            <person name="Whistler C."/>
            <person name="Greenberg E.P."/>
        </authorList>
    </citation>
    <scope>NUCLEOTIDE SEQUENCE [LARGE SCALE GENOMIC DNA]</scope>
    <source>
        <strain>ATCC 700601 / ES114</strain>
    </source>
</reference>
<proteinExistence type="inferred from homology"/>
<comment type="function">
    <text evidence="1">Part of the ABC transporter complex LolCDE involved in the translocation of mature outer membrane-directed lipoproteins, from the inner membrane to the periplasmic chaperone, LolA. Responsible for the formation of the LolA-lipoprotein complex in an ATP-dependent manner.</text>
</comment>
<comment type="subunit">
    <text evidence="1">The complex is composed of two ATP-binding proteins (LolD) and two transmembrane proteins (LolC and LolE).</text>
</comment>
<comment type="subcellular location">
    <subcellularLocation>
        <location evidence="1">Cell inner membrane</location>
        <topology evidence="1">Peripheral membrane protein</topology>
    </subcellularLocation>
</comment>
<comment type="similarity">
    <text evidence="1">Belongs to the ABC transporter superfamily. Lipoprotein translocase (TC 3.A.1.125) family.</text>
</comment>
<name>LOLD_ALIF1</name>
<sequence length="238" mass="26015">MSNPLLVCQGIRKVYQEGAMETEVLKGVDFQINGSELVAIVGSSGSGKSTLLHILGALDEPTAGTVHFQENELTKLSANKQAKIRNQHIGFVYQFHHLLADFSALENVAMPLLIGGVNKKEAAKRATELLEKVGLAHRIEHRPSELSGGERQRVAIARALVNKPALVLADEPTGNLDHKTALDIYNLMRELNQESGTAFLVVTHDNELAAKLDKQLSMQDGRFITETVRSSLAQEMEA</sequence>